<comment type="function">
    <text evidence="1">Pole-localizer protein involved in the regulation of several cellular processes.</text>
</comment>
<comment type="subcellular location">
    <subcellularLocation>
        <location evidence="1">Cytoplasm</location>
    </subcellularLocation>
</comment>
<comment type="similarity">
    <text evidence="1">Belongs to the pole-localizer TmaR family.</text>
</comment>
<evidence type="ECO:0000255" key="1">
    <source>
        <dbReference type="HAMAP-Rule" id="MF_00683"/>
    </source>
</evidence>
<feature type="chain" id="PRO_1000147742" description="Pole-localizer protein TmaR">
    <location>
        <begin position="1"/>
        <end position="100"/>
    </location>
</feature>
<sequence>MDNLLELVRNTRRKNKLKREILDNEKKVRDNTKRVDLLSNLLEYIKPNMSPEDIKCIIENMRDDYEDRVDEHIIKGAELSKERREMNKKISSFKLKEIAK</sequence>
<proteinExistence type="inferred from homology"/>
<gene>
    <name evidence="1" type="primary">tmaR</name>
    <name type="ordered locus">Ping_2721</name>
</gene>
<keyword id="KW-0963">Cytoplasm</keyword>
<keyword id="KW-1185">Reference proteome</keyword>
<name>TMAR_PSYIN</name>
<accession>A1SY66</accession>
<protein>
    <recommendedName>
        <fullName evidence="1">Pole-localizer protein TmaR</fullName>
    </recommendedName>
</protein>
<dbReference type="EMBL" id="CP000510">
    <property type="protein sequence ID" value="ABM04431.1"/>
    <property type="molecule type" value="Genomic_DNA"/>
</dbReference>
<dbReference type="RefSeq" id="WP_011770986.1">
    <property type="nucleotide sequence ID" value="NC_008709.1"/>
</dbReference>
<dbReference type="SMR" id="A1SY66"/>
<dbReference type="STRING" id="357804.Ping_2721"/>
<dbReference type="KEGG" id="pin:Ping_2721"/>
<dbReference type="eggNOG" id="COG2926">
    <property type="taxonomic scope" value="Bacteria"/>
</dbReference>
<dbReference type="HOGENOM" id="CLU_153146_0_0_6"/>
<dbReference type="OrthoDB" id="90485at2"/>
<dbReference type="Proteomes" id="UP000000639">
    <property type="component" value="Chromosome"/>
</dbReference>
<dbReference type="GO" id="GO:0005829">
    <property type="term" value="C:cytosol"/>
    <property type="evidence" value="ECO:0007669"/>
    <property type="project" value="TreeGrafter"/>
</dbReference>
<dbReference type="HAMAP" id="MF_00683">
    <property type="entry name" value="Pole_loc_TmaR"/>
    <property type="match status" value="1"/>
</dbReference>
<dbReference type="InterPro" id="IPR007458">
    <property type="entry name" value="DUF496"/>
</dbReference>
<dbReference type="NCBIfam" id="NF003844">
    <property type="entry name" value="PRK05423.1"/>
    <property type="match status" value="1"/>
</dbReference>
<dbReference type="PANTHER" id="PTHR39591">
    <property type="entry name" value="UPF0265 PROTEIN YEEX"/>
    <property type="match status" value="1"/>
</dbReference>
<dbReference type="PANTHER" id="PTHR39591:SF1">
    <property type="entry name" value="UPF0265 PROTEIN YEEX"/>
    <property type="match status" value="1"/>
</dbReference>
<dbReference type="Pfam" id="PF04363">
    <property type="entry name" value="DUF496"/>
    <property type="match status" value="1"/>
</dbReference>
<dbReference type="PIRSF" id="PIRSF028773">
    <property type="entry name" value="UCP028773"/>
    <property type="match status" value="1"/>
</dbReference>
<reference key="1">
    <citation type="journal article" date="2008" name="BMC Genomics">
        <title>Genomics of an extreme psychrophile, Psychromonas ingrahamii.</title>
        <authorList>
            <person name="Riley M."/>
            <person name="Staley J.T."/>
            <person name="Danchin A."/>
            <person name="Wang T.Z."/>
            <person name="Brettin T.S."/>
            <person name="Hauser L.J."/>
            <person name="Land M.L."/>
            <person name="Thompson L.S."/>
        </authorList>
    </citation>
    <scope>NUCLEOTIDE SEQUENCE [LARGE SCALE GENOMIC DNA]</scope>
    <source>
        <strain>DSM 17664 / CCUG 51855 / 37</strain>
    </source>
</reference>
<organism>
    <name type="scientific">Psychromonas ingrahamii (strain DSM 17664 / CCUG 51855 / 37)</name>
    <dbReference type="NCBI Taxonomy" id="357804"/>
    <lineage>
        <taxon>Bacteria</taxon>
        <taxon>Pseudomonadati</taxon>
        <taxon>Pseudomonadota</taxon>
        <taxon>Gammaproteobacteria</taxon>
        <taxon>Alteromonadales</taxon>
        <taxon>Psychromonadaceae</taxon>
        <taxon>Psychromonas</taxon>
    </lineage>
</organism>